<gene>
    <name evidence="3" type="primary">chbP</name>
</gene>
<comment type="function">
    <text evidence="1">Catalyzes the reversible phosphorolysis of chitobiose (N,N'-diacetylchitobiose or (GlcNAc)(2)) into N-acetyl-alpha-D-glucosamine 1-phosphate (GlcNAc-1-P) and N-acetyl-D-glucosamine (GlcNAc) with inversion of the anomeric configuration (PubMed:13678418). In the synthetic reaction, is also active on glucose-1-phosphate with 10% activity as compared with that on GlcNAc-1-P (PubMed:13678418). GlcNAc is the best acceptor substrate, but the enzyme can use aryl-beta-glycosides of GlcNAc as the acceptor substrate with 10-20% activities of GlcNAc (PubMed:13678418). Shows no phosphorolytic activity on cellobiose (PubMed:13678418).</text>
</comment>
<comment type="catalytic activity">
    <reaction evidence="1">
        <text>N,N'-diacetylchitobiose + phosphate = N-acetyl-alpha-D-glucosamine 1-phosphate + N-acetyl-D-glucosamine</text>
        <dbReference type="Rhea" id="RHEA:32527"/>
        <dbReference type="ChEBI" id="CHEBI:28681"/>
        <dbReference type="ChEBI" id="CHEBI:43474"/>
        <dbReference type="ChEBI" id="CHEBI:57776"/>
        <dbReference type="ChEBI" id="CHEBI:506227"/>
        <dbReference type="EC" id="2.4.1.280"/>
    </reaction>
</comment>
<comment type="biophysicochemical properties">
    <kinetics>
        <KM evidence="1">2 mM for N,N'-diacetylchitobiose</KM>
        <KM evidence="1">69 mM for alpha-D-glucosyl-(1-4)-2-acetamide-2-deoxy-D-glucose</KM>
        <KM evidence="1">14 mM for N-acetyl-alpha-D-glucosamine 1-phosphate</KM>
        <KM evidence="1">13 mM for alpha-D-glucose 1-phosphate</KM>
    </kinetics>
    <phDependence>
        <text evidence="1">Optimum pH is 7.0-7.7.</text>
    </phDependence>
    <temperatureDependence>
        <text evidence="1">Optimum temperature is 30 degrees Celsius.</text>
    </temperatureDependence>
</comment>
<comment type="subunit">
    <text evidence="1 2">Homodimer.</text>
</comment>
<comment type="domain">
    <text evidence="2">Contains an N-terminal beta-sandwich domain and an (alpha/alpha)(6) barrel catalytic domain.</text>
</comment>
<comment type="similarity">
    <text evidence="5">Belongs to the glycosyl hydrolase 94 family.</text>
</comment>
<name>CHBP_VIBPR</name>
<reference key="1">
    <citation type="journal article" date="2004" name="Biochem. J.">
        <title>Reaction mechanism of chitobiose phosphorylase from Vibrio proteolyticus: identification of family 36 glycosyltransferase in Vibrio.</title>
        <authorList>
            <person name="Honda Y."/>
            <person name="Kitaoka M."/>
            <person name="Hayashi K."/>
        </authorList>
    </citation>
    <scope>NUCLEOTIDE SEQUENCE [GENOMIC DNA]</scope>
    <scope>PROTEIN SEQUENCE OF 1-5</scope>
    <scope>FUNCTION</scope>
    <scope>CATALYTIC ACTIVITY</scope>
    <scope>BIOPHYSICOCHEMICAL PROPERTIES</scope>
    <scope>SUBUNIT</scope>
</reference>
<reference key="2">
    <citation type="journal article" date="2004" name="Structure">
        <title>Chitobiose phosphorylase from Vibrio proteolyticus, a member of glycosyl transferase family 36, has a clan GH-L-like (alpha/alpha)(6) barrel fold.</title>
        <authorList>
            <person name="Hidaka M."/>
            <person name="Honda Y."/>
            <person name="Kitaoka M."/>
            <person name="Nirasawa S."/>
            <person name="Hayashi K."/>
            <person name="Wakagi T."/>
            <person name="Shoun H."/>
            <person name="Fushinobu S."/>
        </authorList>
    </citation>
    <scope>X-RAY CRYSTALLOGRAPHY (1.8 ANGSTROMS) IN COMPLEX WITH N-ACETYL-ALPHA-D-GLUCOSAMINE; N-ACETYL-BETA-D-GLUCOSAMINE AND SULFATE</scope>
    <scope>SUBUNIT</scope>
    <scope>DOMAIN</scope>
    <scope>ACTIVE SITE</scope>
</reference>
<protein>
    <recommendedName>
        <fullName evidence="4">N,N'-diacetylchitobiose phosphorylase</fullName>
        <ecNumber evidence="1">2.4.1.280</ecNumber>
    </recommendedName>
    <alternativeName>
        <fullName evidence="3">Chitobiose phosphorylase</fullName>
        <shortName evidence="3">ChBP</shortName>
    </alternativeName>
</protein>
<keyword id="KW-0002">3D-structure</keyword>
<keyword id="KW-0119">Carbohydrate metabolism</keyword>
<keyword id="KW-0903">Direct protein sequencing</keyword>
<keyword id="KW-0328">Glycosyltransferase</keyword>
<keyword id="KW-0808">Transferase</keyword>
<accession>Q76IQ9</accession>
<feature type="chain" id="PRO_0000424107" description="N,N'-diacetylchitobiose phosphorylase">
    <location>
        <begin position="1"/>
        <end position="801"/>
    </location>
</feature>
<feature type="active site" description="Proton donor" evidence="5">
    <location>
        <position position="492"/>
    </location>
</feature>
<feature type="binding site" evidence="5 7">
    <location>
        <position position="333"/>
    </location>
    <ligand>
        <name>N-acetyl-alpha-D-glucosamine 1-phosphate</name>
        <dbReference type="ChEBI" id="CHEBI:57776"/>
    </ligand>
</feature>
<feature type="binding site" evidence="5 6 7">
    <location>
        <position position="343"/>
    </location>
    <ligand>
        <name>N-acetyl-alpha-D-glucosamine 1-phosphate</name>
        <dbReference type="ChEBI" id="CHEBI:57776"/>
    </ligand>
</feature>
<feature type="binding site" evidence="5 6 7">
    <location>
        <position position="349"/>
    </location>
    <ligand>
        <name>N-acetyl-alpha-D-glucosamine 1-phosphate</name>
        <dbReference type="ChEBI" id="CHEBI:57776"/>
    </ligand>
</feature>
<feature type="binding site" evidence="5 6 7">
    <location>
        <position position="350"/>
    </location>
    <ligand>
        <name>N-acetyl-alpha-D-glucosamine 1-phosphate</name>
        <dbReference type="ChEBI" id="CHEBI:57776"/>
    </ligand>
</feature>
<feature type="binding site" evidence="5 6 7">
    <location>
        <position position="490"/>
    </location>
    <ligand>
        <name>N-acetyl-alpha-D-glucosamine 1-phosphate</name>
        <dbReference type="ChEBI" id="CHEBI:57776"/>
    </ligand>
</feature>
<feature type="binding site" evidence="5 6 7">
    <location>
        <position position="492"/>
    </location>
    <ligand>
        <name>N-acetyl-alpha-D-glucosamine 1-phosphate</name>
        <dbReference type="ChEBI" id="CHEBI:57776"/>
    </ligand>
</feature>
<feature type="binding site" evidence="2 6 7">
    <location>
        <position position="492"/>
    </location>
    <ligand>
        <name>N-acetyl-D-glucosamine</name>
        <dbReference type="ChEBI" id="CHEBI:506227"/>
    </ligand>
</feature>
<feature type="binding site" evidence="2 6 7">
    <location>
        <position position="636"/>
    </location>
    <ligand>
        <name>N-acetyl-D-glucosamine</name>
        <dbReference type="ChEBI" id="CHEBI:506227"/>
    </ligand>
</feature>
<feature type="binding site" evidence="5 6 7">
    <location>
        <position position="637"/>
    </location>
    <ligand>
        <name>N-acetyl-alpha-D-glucosamine 1-phosphate</name>
        <dbReference type="ChEBI" id="CHEBI:57776"/>
    </ligand>
</feature>
<feature type="binding site" evidence="2 6 7">
    <location>
        <position position="637"/>
    </location>
    <ligand>
        <name>N-acetyl-D-glucosamine</name>
        <dbReference type="ChEBI" id="CHEBI:506227"/>
    </ligand>
</feature>
<feature type="binding site" evidence="5 7">
    <location>
        <position position="644"/>
    </location>
    <ligand>
        <name>N-acetyl-alpha-D-glucosamine 1-phosphate</name>
        <dbReference type="ChEBI" id="CHEBI:57776"/>
    </ligand>
</feature>
<feature type="binding site" evidence="5 6 7">
    <location>
        <position position="690"/>
    </location>
    <ligand>
        <name>N-acetyl-alpha-D-glucosamine 1-phosphate</name>
        <dbReference type="ChEBI" id="CHEBI:57776"/>
    </ligand>
</feature>
<feature type="binding site" evidence="5 7">
    <location>
        <position position="709"/>
    </location>
    <ligand>
        <name>N-acetyl-alpha-D-glucosamine 1-phosphate</name>
        <dbReference type="ChEBI" id="CHEBI:57776"/>
    </ligand>
</feature>
<feature type="binding site" evidence="5 7">
    <location>
        <position position="710"/>
    </location>
    <ligand>
        <name>N-acetyl-alpha-D-glucosamine 1-phosphate</name>
        <dbReference type="ChEBI" id="CHEBI:57776"/>
    </ligand>
</feature>
<feature type="strand" evidence="9">
    <location>
        <begin position="3"/>
        <end position="7"/>
    </location>
</feature>
<feature type="turn" evidence="9">
    <location>
        <begin position="8"/>
        <end position="11"/>
    </location>
</feature>
<feature type="strand" evidence="9">
    <location>
        <begin position="12"/>
        <end position="16"/>
    </location>
</feature>
<feature type="strand" evidence="9">
    <location>
        <begin position="25"/>
        <end position="28"/>
    </location>
</feature>
<feature type="strand" evidence="9">
    <location>
        <begin position="30"/>
        <end position="38"/>
    </location>
</feature>
<feature type="strand" evidence="9">
    <location>
        <begin position="41"/>
        <end position="48"/>
    </location>
</feature>
<feature type="turn" evidence="9">
    <location>
        <begin position="50"/>
        <end position="52"/>
    </location>
</feature>
<feature type="strand" evidence="9">
    <location>
        <begin position="61"/>
        <end position="64"/>
    </location>
</feature>
<feature type="strand" evidence="9">
    <location>
        <begin position="66"/>
        <end position="68"/>
    </location>
</feature>
<feature type="strand" evidence="9">
    <location>
        <begin position="70"/>
        <end position="75"/>
    </location>
</feature>
<feature type="turn" evidence="9">
    <location>
        <begin position="76"/>
        <end position="78"/>
    </location>
</feature>
<feature type="strand" evidence="9">
    <location>
        <begin position="81"/>
        <end position="86"/>
    </location>
</feature>
<feature type="turn" evidence="9">
    <location>
        <begin position="87"/>
        <end position="90"/>
    </location>
</feature>
<feature type="turn" evidence="9">
    <location>
        <begin position="93"/>
        <end position="95"/>
    </location>
</feature>
<feature type="strand" evidence="9">
    <location>
        <begin position="96"/>
        <end position="103"/>
    </location>
</feature>
<feature type="strand" evidence="9">
    <location>
        <begin position="106"/>
        <end position="113"/>
    </location>
</feature>
<feature type="strand" evidence="9">
    <location>
        <begin position="116"/>
        <end position="123"/>
    </location>
</feature>
<feature type="strand" evidence="9">
    <location>
        <begin position="128"/>
        <end position="139"/>
    </location>
</feature>
<feature type="strand" evidence="9">
    <location>
        <begin position="141"/>
        <end position="143"/>
    </location>
</feature>
<feature type="strand" evidence="9">
    <location>
        <begin position="145"/>
        <end position="152"/>
    </location>
</feature>
<feature type="helix" evidence="9">
    <location>
        <begin position="160"/>
        <end position="164"/>
    </location>
</feature>
<feature type="helix" evidence="9">
    <location>
        <begin position="167"/>
        <end position="170"/>
    </location>
</feature>
<feature type="strand" evidence="9">
    <location>
        <begin position="173"/>
        <end position="179"/>
    </location>
</feature>
<feature type="strand" evidence="9">
    <location>
        <begin position="182"/>
        <end position="187"/>
    </location>
</feature>
<feature type="turn" evidence="9">
    <location>
        <begin position="193"/>
        <end position="196"/>
    </location>
</feature>
<feature type="strand" evidence="9">
    <location>
        <begin position="197"/>
        <end position="204"/>
    </location>
</feature>
<feature type="strand" evidence="9">
    <location>
        <begin position="207"/>
        <end position="212"/>
    </location>
</feature>
<feature type="helix" evidence="9">
    <location>
        <begin position="213"/>
        <end position="217"/>
    </location>
</feature>
<feature type="helix" evidence="9">
    <location>
        <begin position="227"/>
        <end position="231"/>
    </location>
</feature>
<feature type="strand" evidence="9">
    <location>
        <begin position="240"/>
        <end position="242"/>
    </location>
</feature>
<feature type="strand" evidence="9">
    <location>
        <begin position="244"/>
        <end position="254"/>
    </location>
</feature>
<feature type="strand" evidence="9">
    <location>
        <begin position="259"/>
        <end position="269"/>
    </location>
</feature>
<feature type="helix" evidence="9">
    <location>
        <begin position="272"/>
        <end position="279"/>
    </location>
</feature>
<feature type="helix" evidence="9">
    <location>
        <begin position="283"/>
        <end position="301"/>
    </location>
</feature>
<feature type="strand" evidence="9">
    <location>
        <begin position="304"/>
        <end position="307"/>
    </location>
</feature>
<feature type="helix" evidence="9">
    <location>
        <begin position="311"/>
        <end position="317"/>
    </location>
</feature>
<feature type="helix" evidence="9">
    <location>
        <begin position="320"/>
        <end position="331"/>
    </location>
</feature>
<feature type="strand" evidence="9">
    <location>
        <begin position="336"/>
        <end position="338"/>
    </location>
</feature>
<feature type="strand" evidence="9">
    <location>
        <begin position="345"/>
        <end position="347"/>
    </location>
</feature>
<feature type="helix" evidence="9">
    <location>
        <begin position="348"/>
        <end position="354"/>
    </location>
</feature>
<feature type="turn" evidence="9">
    <location>
        <begin position="359"/>
        <end position="361"/>
    </location>
</feature>
<feature type="helix" evidence="9">
    <location>
        <begin position="363"/>
        <end position="375"/>
    </location>
</feature>
<feature type="strand" evidence="9">
    <location>
        <begin position="385"/>
        <end position="387"/>
    </location>
</feature>
<feature type="helix" evidence="9">
    <location>
        <begin position="389"/>
        <end position="392"/>
    </location>
</feature>
<feature type="helix" evidence="9">
    <location>
        <begin position="420"/>
        <end position="422"/>
    </location>
</feature>
<feature type="strand" evidence="9">
    <location>
        <begin position="424"/>
        <end position="426"/>
    </location>
</feature>
<feature type="helix" evidence="9">
    <location>
        <begin position="427"/>
        <end position="430"/>
    </location>
</feature>
<feature type="helix" evidence="9">
    <location>
        <begin position="431"/>
        <end position="442"/>
    </location>
</feature>
<feature type="helix" evidence="9">
    <location>
        <begin position="445"/>
        <end position="449"/>
    </location>
</feature>
<feature type="strand" evidence="9">
    <location>
        <begin position="451"/>
        <end position="453"/>
    </location>
</feature>
<feature type="strand" evidence="9">
    <location>
        <begin position="459"/>
        <end position="461"/>
    </location>
</feature>
<feature type="helix" evidence="9">
    <location>
        <begin position="462"/>
        <end position="475"/>
    </location>
</feature>
<feature type="strand" evidence="9">
    <location>
        <begin position="483"/>
        <end position="486"/>
    </location>
</feature>
<feature type="strand" evidence="9">
    <location>
        <begin position="489"/>
        <end position="491"/>
    </location>
</feature>
<feature type="strand" evidence="9">
    <location>
        <begin position="497"/>
        <end position="501"/>
    </location>
</feature>
<feature type="helix" evidence="9">
    <location>
        <begin position="502"/>
        <end position="522"/>
    </location>
</feature>
<feature type="helix" evidence="9">
    <location>
        <begin position="525"/>
        <end position="545"/>
    </location>
</feature>
<feature type="strand" evidence="9">
    <location>
        <begin position="546"/>
        <end position="548"/>
    </location>
</feature>
<feature type="turn" evidence="9">
    <location>
        <begin position="549"/>
        <end position="552"/>
    </location>
</feature>
<feature type="strand" evidence="9">
    <location>
        <begin position="564"/>
        <end position="566"/>
    </location>
</feature>
<feature type="helix" evidence="9">
    <location>
        <begin position="577"/>
        <end position="585"/>
    </location>
</feature>
<feature type="helix" evidence="9">
    <location>
        <begin position="591"/>
        <end position="605"/>
    </location>
</feature>
<feature type="strand" evidence="9">
    <location>
        <begin position="613"/>
        <end position="616"/>
    </location>
</feature>
<feature type="turn" evidence="9">
    <location>
        <begin position="623"/>
        <end position="625"/>
    </location>
</feature>
<feature type="helix" evidence="9">
    <location>
        <begin position="627"/>
        <end position="630"/>
    </location>
</feature>
<feature type="strand" evidence="9">
    <location>
        <begin position="640"/>
        <end position="643"/>
    </location>
</feature>
<feature type="helix" evidence="9">
    <location>
        <begin position="646"/>
        <end position="655"/>
    </location>
</feature>
<feature type="helix" evidence="9">
    <location>
        <begin position="659"/>
        <end position="669"/>
    </location>
</feature>
<feature type="helix" evidence="9">
    <location>
        <begin position="671"/>
        <end position="674"/>
    </location>
</feature>
<feature type="helix" evidence="9">
    <location>
        <begin position="678"/>
        <end position="681"/>
    </location>
</feature>
<feature type="strand" evidence="9">
    <location>
        <begin position="689"/>
        <end position="692"/>
    </location>
</feature>
<feature type="turn" evidence="9">
    <location>
        <begin position="698"/>
        <end position="701"/>
    </location>
</feature>
<feature type="strand" evidence="9">
    <location>
        <begin position="703"/>
        <end position="708"/>
    </location>
</feature>
<feature type="helix" evidence="9">
    <location>
        <begin position="711"/>
        <end position="721"/>
    </location>
</feature>
<feature type="strand" evidence="8">
    <location>
        <begin position="726"/>
        <end position="728"/>
    </location>
</feature>
<feature type="strand" evidence="9">
    <location>
        <begin position="733"/>
        <end position="735"/>
    </location>
</feature>
<feature type="strand" evidence="9">
    <location>
        <begin position="745"/>
        <end position="752"/>
    </location>
</feature>
<feature type="strand" evidence="9">
    <location>
        <begin position="755"/>
        <end position="762"/>
    </location>
</feature>
<feature type="strand" evidence="9">
    <location>
        <begin position="771"/>
        <end position="776"/>
    </location>
</feature>
<feature type="strand" evidence="9">
    <location>
        <begin position="779"/>
        <end position="781"/>
    </location>
</feature>
<feature type="strand" evidence="9">
    <location>
        <begin position="783"/>
        <end position="785"/>
    </location>
</feature>
<feature type="strand" evidence="9">
    <location>
        <begin position="793"/>
        <end position="800"/>
    </location>
</feature>
<evidence type="ECO:0000269" key="1">
    <source>
    </source>
</evidence>
<evidence type="ECO:0000269" key="2">
    <source>
    </source>
</evidence>
<evidence type="ECO:0000303" key="3">
    <source>
    </source>
</evidence>
<evidence type="ECO:0000305" key="4"/>
<evidence type="ECO:0000305" key="5">
    <source>
    </source>
</evidence>
<evidence type="ECO:0007744" key="6">
    <source>
        <dbReference type="PDB" id="1V7W"/>
    </source>
</evidence>
<evidence type="ECO:0007744" key="7">
    <source>
        <dbReference type="PDB" id="1V7X"/>
    </source>
</evidence>
<evidence type="ECO:0007829" key="8">
    <source>
        <dbReference type="PDB" id="1V7V"/>
    </source>
</evidence>
<evidence type="ECO:0007829" key="9">
    <source>
        <dbReference type="PDB" id="1V7W"/>
    </source>
</evidence>
<organism>
    <name type="scientific">Vibrio proteolyticus</name>
    <name type="common">Aeromonas proteolytica</name>
    <dbReference type="NCBI Taxonomy" id="671"/>
    <lineage>
        <taxon>Bacteria</taxon>
        <taxon>Pseudomonadati</taxon>
        <taxon>Pseudomonadota</taxon>
        <taxon>Gammaproteobacteria</taxon>
        <taxon>Vibrionales</taxon>
        <taxon>Vibrionaceae</taxon>
        <taxon>Vibrio</taxon>
    </lineage>
</organism>
<proteinExistence type="evidence at protein level"/>
<dbReference type="EC" id="2.4.1.280" evidence="1"/>
<dbReference type="EMBL" id="AB096684">
    <property type="protein sequence ID" value="BAC87867.1"/>
    <property type="molecule type" value="Genomic_DNA"/>
</dbReference>
<dbReference type="RefSeq" id="WP_021705716.1">
    <property type="nucleotide sequence ID" value="NZ_BAABTA010000010.1"/>
</dbReference>
<dbReference type="PDB" id="1V7V">
    <property type="method" value="X-ray"/>
    <property type="resolution" value="1.80 A"/>
    <property type="chains" value="A=1-801"/>
</dbReference>
<dbReference type="PDB" id="1V7W">
    <property type="method" value="X-ray"/>
    <property type="resolution" value="1.60 A"/>
    <property type="chains" value="A=1-801"/>
</dbReference>
<dbReference type="PDB" id="1V7X">
    <property type="method" value="X-ray"/>
    <property type="resolution" value="2.00 A"/>
    <property type="chains" value="A=1-801"/>
</dbReference>
<dbReference type="PDBsum" id="1V7V"/>
<dbReference type="PDBsum" id="1V7W"/>
<dbReference type="PDBsum" id="1V7X"/>
<dbReference type="SMR" id="Q76IQ9"/>
<dbReference type="CAZy" id="GH94">
    <property type="family name" value="Glycoside Hydrolase Family 94"/>
</dbReference>
<dbReference type="KEGG" id="ag:BAC87867"/>
<dbReference type="BRENDA" id="2.4.1.280">
    <property type="organism ID" value="167"/>
</dbReference>
<dbReference type="SABIO-RK" id="Q76IQ9"/>
<dbReference type="EvolutionaryTrace" id="Q76IQ9"/>
<dbReference type="GO" id="GO:0030246">
    <property type="term" value="F:carbohydrate binding"/>
    <property type="evidence" value="ECO:0007669"/>
    <property type="project" value="InterPro"/>
</dbReference>
<dbReference type="GO" id="GO:0016757">
    <property type="term" value="F:glycosyltransferase activity"/>
    <property type="evidence" value="ECO:0007669"/>
    <property type="project" value="UniProtKB-KW"/>
</dbReference>
<dbReference type="GO" id="GO:0005975">
    <property type="term" value="P:carbohydrate metabolic process"/>
    <property type="evidence" value="ECO:0007669"/>
    <property type="project" value="InterPro"/>
</dbReference>
<dbReference type="CDD" id="cd11755">
    <property type="entry name" value="GH94N_ChBP_like"/>
    <property type="match status" value="1"/>
</dbReference>
<dbReference type="Gene3D" id="1.50.10.10">
    <property type="match status" value="1"/>
</dbReference>
<dbReference type="Gene3D" id="2.70.98.40">
    <property type="entry name" value="Glycoside hydrolase, family 65, N-terminal domain"/>
    <property type="match status" value="1"/>
</dbReference>
<dbReference type="Gene3D" id="2.60.420.10">
    <property type="entry name" value="Maltose phosphorylase, domain 3"/>
    <property type="match status" value="1"/>
</dbReference>
<dbReference type="InterPro" id="IPR008928">
    <property type="entry name" value="6-hairpin_glycosidase_sf"/>
</dbReference>
<dbReference type="InterPro" id="IPR012341">
    <property type="entry name" value="6hp_glycosidase-like_sf"/>
</dbReference>
<dbReference type="InterPro" id="IPR009342">
    <property type="entry name" value="Carb-bd_put_dom"/>
</dbReference>
<dbReference type="InterPro" id="IPR011013">
    <property type="entry name" value="Gal_mutarotase_sf_dom"/>
</dbReference>
<dbReference type="InterPro" id="IPR033432">
    <property type="entry name" value="GH36_catalytic"/>
</dbReference>
<dbReference type="InterPro" id="IPR052047">
    <property type="entry name" value="GH94_Enzymes"/>
</dbReference>
<dbReference type="InterPro" id="IPR037828">
    <property type="entry name" value="GH94N_ChBP"/>
</dbReference>
<dbReference type="InterPro" id="IPR037018">
    <property type="entry name" value="Glyco_hydro_65_N_sf"/>
</dbReference>
<dbReference type="InterPro" id="IPR010383">
    <property type="entry name" value="Glyco_hydrolase_94"/>
</dbReference>
<dbReference type="PANTHER" id="PTHR37469">
    <property type="entry name" value="CELLOBIONIC ACID PHOSPHORYLASE-RELATED"/>
    <property type="match status" value="1"/>
</dbReference>
<dbReference type="PANTHER" id="PTHR37469:SF3">
    <property type="entry name" value="PUTATIVE-RELATED"/>
    <property type="match status" value="1"/>
</dbReference>
<dbReference type="Pfam" id="PF17167">
    <property type="entry name" value="Glyco_hydro_36"/>
    <property type="match status" value="1"/>
</dbReference>
<dbReference type="Pfam" id="PF06165">
    <property type="entry name" value="Glyco_transf_36"/>
    <property type="match status" value="1"/>
</dbReference>
<dbReference type="SMART" id="SM01068">
    <property type="entry name" value="CBM_X"/>
    <property type="match status" value="1"/>
</dbReference>
<dbReference type="SUPFAM" id="SSF74650">
    <property type="entry name" value="Galactose mutarotase-like"/>
    <property type="match status" value="1"/>
</dbReference>
<dbReference type="SUPFAM" id="SSF48208">
    <property type="entry name" value="Six-hairpin glycosidases"/>
    <property type="match status" value="1"/>
</dbReference>
<sequence length="801" mass="90361">MKYGYFDNDNREYVITRPDVPAPWTNYLGTEKFCTVISHNAGGYSFYNSPEYNRVTKFRPNATFDRPGHYVYLRDDDSGDYWSISWQPVAKSLDEAQYQIRHGLSYSKFQCDYNGIHARKTLFVPKGEDAEIWDVVIKNTSDQVRTISAFSFVEFSFSHIQSDNQNHQMSLYSAGTAYRPGLIEYDLYYNTDDFEGFYYLASTFDPDSYDGQRDRFLGLYRDEANPLAVEQGRCSNSAQTCYNHCGSLHKQFTLQPGEEIRFAYILGIGKGNGERLREHYQDVANIDAAFAAIKAHWDERCAKFQVKSPNQGLDTMINAWTLYQAETCVVWSRFASFIEVGGRTGLGYRDTAQDAISVPHANPEMTRKRIVDLLRGQVKAGYGLHLFDPDWFDPEKEDVAPSKSPTVVPTPSDEDKIHGIKDTCSDDHLWLIPTICKYVMETGETSFFDQMIPYADGGEASVYEHMKAALDFSAEYVGQTGICKGLRADWNDCLNLGGGESSMVSFLHFWALQEFIDLAKFLGKDQDVNTYTEMAANVREACETHLWDDEGGWYIRGLTKNGDKIGTAQQQEGRVHLESNTLAVLSGLASQERGEQAMDAVDEHLFSPYGLHLNAPSFSTPNDDIGFVTRVYQGVKENGAIFSHPNPWAWVAETKLGRGDRAMKFYDALNPYNQNDIIEKRIAEPYSYVQFIMGRDHQDHGRANHPWLTGTSGWAYFAVTNYILGVQSGFTGLSVDPCIPSDWPGFEVTRQWRGATYHIQVENPDHVSKGVKSITLNGAPIQGRIPPQAQGSDNQVVVVLG</sequence>